<sequence length="432" mass="47365">MTLWVLGLNHQTAPVDLRERAAFAGDALPRALDSLRTLPQVREAALLSTCNRTELYAMADDPQTLVAWLDMHAPGLSGYLYQHRDAEAVRHLFRVATGLDSMVLGEPQILGQVKDAWAVARAHGALGSGLDRLFQQTFSVAKRARTDTRVGANPVSVASTAVRLAQESFARLNESTVLLVGAGETIELAAKHLSEGRVRRLLIANRTLAHAQTLATQHGGVALPLTELDRHLAEADVVFSATAAREPVVTRVQVEQALRTRKRKPMLLFDLAVPRDIEASVAELSDAYLYTVDDLERAVEDNRRSRREAADQAEAIIDLQVARYVETLQANERQAPLKRLRAFGDSTRDELLAKARQQLSNGKPADEVLEQLAHALTNRLLHPPTAALRDAALNNDLDLTSAADRLFPEKPGYRHPPVATPIVRTDDANPAP</sequence>
<reference key="1">
    <citation type="journal article" date="2008" name="J. Biotechnol.">
        <title>The genome of Xanthomonas campestris pv. campestris B100 and its use for the reconstruction of metabolic pathways involved in xanthan biosynthesis.</title>
        <authorList>
            <person name="Vorhoelter F.-J."/>
            <person name="Schneiker S."/>
            <person name="Goesmann A."/>
            <person name="Krause L."/>
            <person name="Bekel T."/>
            <person name="Kaiser O."/>
            <person name="Linke B."/>
            <person name="Patschkowski T."/>
            <person name="Rueckert C."/>
            <person name="Schmid J."/>
            <person name="Sidhu V.K."/>
            <person name="Sieber V."/>
            <person name="Tauch A."/>
            <person name="Watt S.A."/>
            <person name="Weisshaar B."/>
            <person name="Becker A."/>
            <person name="Niehaus K."/>
            <person name="Puehler A."/>
        </authorList>
    </citation>
    <scope>NUCLEOTIDE SEQUENCE [LARGE SCALE GENOMIC DNA]</scope>
    <source>
        <strain>B100</strain>
    </source>
</reference>
<keyword id="KW-0521">NADP</keyword>
<keyword id="KW-0560">Oxidoreductase</keyword>
<keyword id="KW-0627">Porphyrin biosynthesis</keyword>
<proteinExistence type="inferred from homology"/>
<comment type="function">
    <text evidence="1">Catalyzes the NADPH-dependent reduction of glutamyl-tRNA(Glu) to glutamate 1-semialdehyde (GSA).</text>
</comment>
<comment type="catalytic activity">
    <reaction evidence="1">
        <text>(S)-4-amino-5-oxopentanoate + tRNA(Glu) + NADP(+) = L-glutamyl-tRNA(Glu) + NADPH + H(+)</text>
        <dbReference type="Rhea" id="RHEA:12344"/>
        <dbReference type="Rhea" id="RHEA-COMP:9663"/>
        <dbReference type="Rhea" id="RHEA-COMP:9680"/>
        <dbReference type="ChEBI" id="CHEBI:15378"/>
        <dbReference type="ChEBI" id="CHEBI:57501"/>
        <dbReference type="ChEBI" id="CHEBI:57783"/>
        <dbReference type="ChEBI" id="CHEBI:58349"/>
        <dbReference type="ChEBI" id="CHEBI:78442"/>
        <dbReference type="ChEBI" id="CHEBI:78520"/>
        <dbReference type="EC" id="1.2.1.70"/>
    </reaction>
</comment>
<comment type="pathway">
    <text evidence="1">Porphyrin-containing compound metabolism; protoporphyrin-IX biosynthesis; 5-aminolevulinate from L-glutamyl-tRNA(Glu): step 1/2.</text>
</comment>
<comment type="subunit">
    <text evidence="1">Homodimer.</text>
</comment>
<comment type="domain">
    <text evidence="1">Possesses an unusual extended V-shaped dimeric structure with each monomer consisting of three distinct domains arranged along a curved 'spinal' alpha-helix. The N-terminal catalytic domain specifically recognizes the glutamate moiety of the substrate. The second domain is the NADPH-binding domain, and the third C-terminal domain is responsible for dimerization.</text>
</comment>
<comment type="miscellaneous">
    <text evidence="1">During catalysis, the active site Cys acts as a nucleophile attacking the alpha-carbonyl group of tRNA-bound glutamate with the formation of a thioester intermediate between enzyme and glutamate, and the concomitant release of tRNA(Glu). The thioester intermediate is finally reduced by direct hydride transfer from NADPH, to form the product GSA.</text>
</comment>
<comment type="similarity">
    <text evidence="1">Belongs to the glutamyl-tRNA reductase family.</text>
</comment>
<name>HEM1_XANCB</name>
<dbReference type="EC" id="1.2.1.70" evidence="1"/>
<dbReference type="EMBL" id="AM920689">
    <property type="protein sequence ID" value="CAP52846.1"/>
    <property type="molecule type" value="Genomic_DNA"/>
</dbReference>
<dbReference type="SMR" id="B0RUA4"/>
<dbReference type="KEGG" id="xca:xcc-b100_3481"/>
<dbReference type="HOGENOM" id="CLU_035113_2_2_6"/>
<dbReference type="UniPathway" id="UPA00251">
    <property type="reaction ID" value="UER00316"/>
</dbReference>
<dbReference type="Proteomes" id="UP000001188">
    <property type="component" value="Chromosome"/>
</dbReference>
<dbReference type="GO" id="GO:0008883">
    <property type="term" value="F:glutamyl-tRNA reductase activity"/>
    <property type="evidence" value="ECO:0007669"/>
    <property type="project" value="UniProtKB-UniRule"/>
</dbReference>
<dbReference type="GO" id="GO:0050661">
    <property type="term" value="F:NADP binding"/>
    <property type="evidence" value="ECO:0007669"/>
    <property type="project" value="InterPro"/>
</dbReference>
<dbReference type="GO" id="GO:0019353">
    <property type="term" value="P:protoporphyrinogen IX biosynthetic process from glutamate"/>
    <property type="evidence" value="ECO:0007669"/>
    <property type="project" value="TreeGrafter"/>
</dbReference>
<dbReference type="CDD" id="cd05213">
    <property type="entry name" value="NAD_bind_Glutamyl_tRNA_reduct"/>
    <property type="match status" value="1"/>
</dbReference>
<dbReference type="FunFam" id="3.30.460.30:FF:000001">
    <property type="entry name" value="Glutamyl-tRNA reductase"/>
    <property type="match status" value="1"/>
</dbReference>
<dbReference type="FunFam" id="3.40.50.720:FF:000031">
    <property type="entry name" value="Glutamyl-tRNA reductase"/>
    <property type="match status" value="1"/>
</dbReference>
<dbReference type="Gene3D" id="3.30.460.30">
    <property type="entry name" value="Glutamyl-tRNA reductase, N-terminal domain"/>
    <property type="match status" value="1"/>
</dbReference>
<dbReference type="Gene3D" id="3.40.50.720">
    <property type="entry name" value="NAD(P)-binding Rossmann-like Domain"/>
    <property type="match status" value="1"/>
</dbReference>
<dbReference type="HAMAP" id="MF_00087">
    <property type="entry name" value="Glu_tRNA_reductase"/>
    <property type="match status" value="1"/>
</dbReference>
<dbReference type="InterPro" id="IPR000343">
    <property type="entry name" value="4pyrrol_synth_GluRdtase"/>
</dbReference>
<dbReference type="InterPro" id="IPR015896">
    <property type="entry name" value="4pyrrol_synth_GluRdtase_dimer"/>
</dbReference>
<dbReference type="InterPro" id="IPR015895">
    <property type="entry name" value="4pyrrol_synth_GluRdtase_N"/>
</dbReference>
<dbReference type="InterPro" id="IPR018214">
    <property type="entry name" value="GluRdtase_CS"/>
</dbReference>
<dbReference type="InterPro" id="IPR036453">
    <property type="entry name" value="GluRdtase_dimer_dom_sf"/>
</dbReference>
<dbReference type="InterPro" id="IPR036343">
    <property type="entry name" value="GluRdtase_N_sf"/>
</dbReference>
<dbReference type="InterPro" id="IPR036291">
    <property type="entry name" value="NAD(P)-bd_dom_sf"/>
</dbReference>
<dbReference type="InterPro" id="IPR006151">
    <property type="entry name" value="Shikm_DH/Glu-tRNA_Rdtase"/>
</dbReference>
<dbReference type="NCBIfam" id="TIGR01035">
    <property type="entry name" value="hemA"/>
    <property type="match status" value="1"/>
</dbReference>
<dbReference type="PANTHER" id="PTHR43013">
    <property type="entry name" value="GLUTAMYL-TRNA REDUCTASE"/>
    <property type="match status" value="1"/>
</dbReference>
<dbReference type="PANTHER" id="PTHR43013:SF1">
    <property type="entry name" value="GLUTAMYL-TRNA REDUCTASE"/>
    <property type="match status" value="1"/>
</dbReference>
<dbReference type="Pfam" id="PF00745">
    <property type="entry name" value="GlutR_dimer"/>
    <property type="match status" value="1"/>
</dbReference>
<dbReference type="Pfam" id="PF05201">
    <property type="entry name" value="GlutR_N"/>
    <property type="match status" value="1"/>
</dbReference>
<dbReference type="Pfam" id="PF01488">
    <property type="entry name" value="Shikimate_DH"/>
    <property type="match status" value="1"/>
</dbReference>
<dbReference type="PIRSF" id="PIRSF000445">
    <property type="entry name" value="4pyrrol_synth_GluRdtase"/>
    <property type="match status" value="1"/>
</dbReference>
<dbReference type="SUPFAM" id="SSF69742">
    <property type="entry name" value="Glutamyl tRNA-reductase catalytic, N-terminal domain"/>
    <property type="match status" value="1"/>
</dbReference>
<dbReference type="SUPFAM" id="SSF69075">
    <property type="entry name" value="Glutamyl tRNA-reductase dimerization domain"/>
    <property type="match status" value="1"/>
</dbReference>
<dbReference type="SUPFAM" id="SSF51735">
    <property type="entry name" value="NAD(P)-binding Rossmann-fold domains"/>
    <property type="match status" value="1"/>
</dbReference>
<dbReference type="PROSITE" id="PS00747">
    <property type="entry name" value="GLUTR"/>
    <property type="match status" value="1"/>
</dbReference>
<evidence type="ECO:0000255" key="1">
    <source>
        <dbReference type="HAMAP-Rule" id="MF_00087"/>
    </source>
</evidence>
<evidence type="ECO:0000256" key="2">
    <source>
        <dbReference type="SAM" id="MobiDB-lite"/>
    </source>
</evidence>
<organism>
    <name type="scientific">Xanthomonas campestris pv. campestris (strain B100)</name>
    <dbReference type="NCBI Taxonomy" id="509169"/>
    <lineage>
        <taxon>Bacteria</taxon>
        <taxon>Pseudomonadati</taxon>
        <taxon>Pseudomonadota</taxon>
        <taxon>Gammaproteobacteria</taxon>
        <taxon>Lysobacterales</taxon>
        <taxon>Lysobacteraceae</taxon>
        <taxon>Xanthomonas</taxon>
    </lineage>
</organism>
<feature type="chain" id="PRO_0000335081" description="Glutamyl-tRNA reductase">
    <location>
        <begin position="1"/>
        <end position="432"/>
    </location>
</feature>
<feature type="region of interest" description="Disordered" evidence="2">
    <location>
        <begin position="408"/>
        <end position="432"/>
    </location>
</feature>
<feature type="active site" description="Nucleophile" evidence="1">
    <location>
        <position position="50"/>
    </location>
</feature>
<feature type="binding site" evidence="1">
    <location>
        <begin position="49"/>
        <end position="52"/>
    </location>
    <ligand>
        <name>substrate</name>
    </ligand>
</feature>
<feature type="binding site" evidence="1">
    <location>
        <position position="101"/>
    </location>
    <ligand>
        <name>substrate</name>
    </ligand>
</feature>
<feature type="binding site" evidence="1">
    <location>
        <begin position="106"/>
        <end position="108"/>
    </location>
    <ligand>
        <name>substrate</name>
    </ligand>
</feature>
<feature type="binding site" evidence="1">
    <location>
        <position position="112"/>
    </location>
    <ligand>
        <name>substrate</name>
    </ligand>
</feature>
<feature type="binding site" evidence="1">
    <location>
        <begin position="181"/>
        <end position="186"/>
    </location>
    <ligand>
        <name>NADP(+)</name>
        <dbReference type="ChEBI" id="CHEBI:58349"/>
    </ligand>
</feature>
<feature type="site" description="Important for activity" evidence="1">
    <location>
        <position position="91"/>
    </location>
</feature>
<protein>
    <recommendedName>
        <fullName evidence="1">Glutamyl-tRNA reductase</fullName>
        <shortName evidence="1">GluTR</shortName>
        <ecNumber evidence="1">1.2.1.70</ecNumber>
    </recommendedName>
</protein>
<accession>B0RUA4</accession>
<gene>
    <name evidence="1" type="primary">hemA</name>
    <name type="ordered locus">xcc-b100_3481</name>
</gene>